<comment type="function">
    <text evidence="2 7 8 9 10 13">Involved in the regulation of multiple aspects of embryonic and adult neurogenesis (PubMed:17825401, PubMed:19502360, PubMed:31444471). Required for neural progenitor proliferation in the ventrical/subventrical zone during embryonic brain development and in the adult dentate gyrus of the hippocampus (PubMed:17825401, PubMed:19502360). Participates in the Wnt-mediated neural progenitor proliferation as a positive regulator by modulating GSK3B activity and CTNNB1 abundance (PubMed:19303846). Plays a role as a modulator of the AKT-mTOR signaling pathway controlling the tempo of the process of newborn neurons integration during adult neurogenesis, including neuron positioning, dendritic development and synapse formation (PubMed:19778506). Inhibits the activation of AKT-mTOR signaling upon interaction with CCDC88A (PubMed:19778506). Regulates the migration of early-born granule cell precursors toward the dentate gyrus during the hippocampal development (PubMed:19502360). Inhibits ATF4 transcription factor activity in neurons by disrupting ATF4 dimerization and DNA-binding (PubMed:31444471). Plays a role, together with PCNT, in the microtubule network formation (By similarity).</text>
</comment>
<comment type="subunit">
    <text evidence="2 6 8 10 11 13">Interacts with NDEL1 (PubMed:14962739). Interacts with CCDC88A (via C-terminus); the interaction is direct (PubMed:19778506). Interacts with GSK3B (PubMed:19303846). Interacts with tubulin alpha, ACTN2, ANKHD1, ATF4, ATF5, CEP63, EIF3S3, MAP1A, NDEL1, PAFAH1B1, RANBP9, SPTBN4, SYNE1 and TRAF3IP1 (By similarity). Interaction with microtubules may be mediated in part by TRAF3IP1. Interacts (via C-terminal) with PCNT (By similarity). Interacts with CHCHD6 (By similarity). Interacts with CCDC141 (PubMed:20956536). Interacts with FBXW7, the substrate-recognition component of a SCF (SKP1-CUL1-F-box protein) E3 ubiquitin-protein ligase complex; the interaction targets DISC1 for proteasomal degradation (By similarity). Interacts with ZNF365 (By similarity). Interacts with ATF4; inhibiting ATF4 transcription factor activity by disrupting ATF4 dimerization and DNA-binding (PubMed:31444471). Interacts with PDE4B (By similarity).</text>
</comment>
<comment type="interaction">
    <interactant intactId="EBI-2298259">
        <id>Q811T9</id>
    </interactant>
    <interactant intactId="EBI-2298259">
        <id>Q811T9</id>
        <label>Disc1</label>
    </interactant>
    <organismsDiffer>false</organismsDiffer>
    <experiments>2</experiments>
</comment>
<comment type="interaction">
    <interactant intactId="EBI-2298259">
        <id>Q811T9</id>
    </interactant>
    <interactant intactId="EBI-2933755">
        <id>Q91VR7</id>
        <label>Map1lc3a</label>
    </interactant>
    <organismsDiffer>false</organismsDiffer>
    <experiments>2</experiments>
</comment>
<comment type="interaction">
    <interactant intactId="EBI-2298259">
        <id>Q811T9</id>
    </interactant>
    <interactant intactId="EBI-373586">
        <id>P49841</id>
        <label>GSK3B</label>
    </interactant>
    <organismsDiffer>true</organismsDiffer>
    <experiments>4</experiments>
</comment>
<comment type="interaction">
    <interactant intactId="EBI-15881527">
        <id>Q811T9-1</id>
    </interactant>
    <interactant intactId="EBI-15915736">
        <id>O75962-4</id>
        <label>TRIO</label>
    </interactant>
    <organismsDiffer>true</organismsDiffer>
    <experiments>2</experiments>
</comment>
<comment type="subcellular location">
    <subcellularLocation>
        <location evidence="6">Cytoplasm</location>
    </subcellularLocation>
    <subcellularLocation>
        <location evidence="2">Cytoplasm</location>
        <location evidence="2">Cytoskeleton</location>
    </subcellularLocation>
    <subcellularLocation>
        <location evidence="2">Mitochondrion</location>
    </subcellularLocation>
    <subcellularLocation>
        <location evidence="2">Cytoplasm</location>
        <location evidence="2">Cytoskeleton</location>
        <location evidence="2">Microtubule organizing center</location>
        <location evidence="2">Centrosome</location>
    </subcellularLocation>
    <subcellularLocation>
        <location evidence="12">Postsynaptic density</location>
    </subcellularLocation>
    <text evidence="1 2 6">Colocalizes with NDEL1 in the perinuclear region and the centrosome (PubMed:14962739). Localizes to punctate cytoplasmic foci which overlap in part with mitochondria. Colocalizes with PCNT at the centrosome (By similarity).</text>
</comment>
<comment type="alternative products">
    <event type="alternative splicing"/>
    <isoform>
        <id>Q811T9-1</id>
        <name>1</name>
        <sequence type="displayed"/>
    </isoform>
    <isoform>
        <id>Q811T9-2</id>
        <name>2</name>
        <sequence type="described" ref="VSP_019318"/>
    </isoform>
    <isoform>
        <id>Q811T9-3</id>
        <name>3</name>
        <sequence type="described" ref="VSP_019321"/>
    </isoform>
    <isoform>
        <id>Q811T9-4</id>
        <name>4</name>
        <name>ES</name>
        <sequence type="described" ref="VSP_019319 VSP_019320"/>
    </isoform>
</comment>
<comment type="tissue specificity">
    <text evidence="5 7 9">Expressed in granule cell precursors within the dentate migratory stream during the first week of postnatal life and in differentiated granule cells of the hippocampus (at protein level). Detected in heart, brain, kidney, and testis (PubMed:12504857). Expressed in dentate gyrus, hippocampus and in the olfactory bulb.</text>
</comment>
<comment type="developmental stage">
    <text evidence="8 9">Expressed in neuronal progenitors residing in the ventricular and subventriculare zones and in postmitotic neurons in the cortical plate of the cerebral cortex at 15 dpc. Expressed in granule cell precursors within the dentate migratory stream of the hippocampus at 19 dpc (at protein level).</text>
</comment>
<comment type="PTM">
    <text evidence="2">Ubiquitinated. Ubiquitination with 'Lys-48'-linked polyubiquitin chains leads to its proteasomal degradation.</text>
</comment>
<comment type="disruption phenotype">
    <text evidence="9">Loss of function of DISC1 in the dentate gyrus of adult mice results in reduced neural progenitor cell proliferation and the appearance of schizophrenic and depressive-like behaviors.</text>
</comment>
<name>DISC1_MOUSE</name>
<reference key="1">
    <citation type="journal article" date="2002" name="Genomics">
        <title>Cloning and characterization of Disc1, the mouse ortholog of DISC1 (Disrupted-in-Schizophrenia 1).</title>
        <authorList>
            <person name="Ma L."/>
            <person name="Liu Y."/>
            <person name="Ky B."/>
            <person name="Shughrue P.J."/>
            <person name="Austin C.P."/>
            <person name="Morris J.A."/>
        </authorList>
    </citation>
    <scope>NUCLEOTIDE SEQUENCE [MRNA] (ISOFORMS 1 AND 3)</scope>
    <scope>TISSUE SPECIFICITY</scope>
    <source>
        <strain>BALB/cJ</strain>
    </source>
</reference>
<reference key="2">
    <citation type="journal article" date="2003" name="Genomics">
        <title>Evolutionary constraints on the Disrupted in Schizophrenia locus.</title>
        <authorList>
            <person name="Taylor M.S."/>
            <person name="Devon R.S."/>
            <person name="Millar J.K."/>
            <person name="Porteous D.J."/>
        </authorList>
    </citation>
    <scope>NUCLEOTIDE SEQUENCE [MRNA] (ISOFORM 4)</scope>
    <scope>NUCLEOTIDE SEQUENCE [MRNA] OF 1-594 (ISOFORM 1)</scope>
    <source>
        <strain>C57BL/6J</strain>
    </source>
</reference>
<reference key="3">
    <citation type="journal article" date="2003" name="Proc. Natl. Acad. Sci. U.S.A.">
        <title>Disrupted-in-Schizophrenia-1 (DISC-1): mutant truncation prevents binding to NudE-like (NUDEL) and inhibits neurite outgrowth.</title>
        <authorList>
            <person name="Ozeki Y."/>
            <person name="Tomoda T."/>
            <person name="Kleiderlein J."/>
            <person name="Kamiya A."/>
            <person name="Bord L."/>
            <person name="Fujii K."/>
            <person name="Okawa M."/>
            <person name="Yamada N."/>
            <person name="Hatten M.E."/>
            <person name="Snyder S.H."/>
            <person name="Ross C.A."/>
            <person name="Sawa A."/>
        </authorList>
    </citation>
    <scope>NUCLEOTIDE SEQUENCE [MRNA] (ISOFORMS 1 AND 2)</scope>
    <source>
        <strain>C57BL/6J</strain>
    </source>
</reference>
<reference key="4">
    <citation type="journal article" date="2004" name="Proc. Natl. Acad. Sci. U.S.A.">
        <authorList>
            <person name="Ozeki Y."/>
            <person name="Tomoda T."/>
            <person name="Kleiderlein J."/>
            <person name="Kamiya A."/>
            <person name="Bord L."/>
            <person name="Fujii K."/>
            <person name="Okawa M."/>
            <person name="Yamada N."/>
            <person name="Hatten M.E."/>
            <person name="Snyder S.H."/>
            <person name="Ross C.A."/>
            <person name="Sawa A."/>
        </authorList>
    </citation>
    <scope>ERRATUM OF PUBMED:12506198</scope>
</reference>
<reference key="5">
    <citation type="journal article" date="2004" name="Mol. Cell. Neurosci.">
        <title>Disrupted in Schizophrenia 1 and Nudel form a neurodevelopmentally regulated protein complex: implications for schizophrenia and other major neurological disorders.</title>
        <authorList>
            <person name="Brandon N.J."/>
            <person name="Handford E.J."/>
            <person name="Schurov I."/>
            <person name="Rain J.-C."/>
            <person name="Pelling M."/>
            <person name="Duran-Jimeniz B."/>
            <person name="Camargo L.M."/>
            <person name="Oliver K.R."/>
            <person name="Beher D."/>
            <person name="Shearman M.S."/>
            <person name="Whiting P.J."/>
        </authorList>
    </citation>
    <scope>INTERACTION WITH NDEL1</scope>
    <scope>SUBCELLULAR LOCATION</scope>
</reference>
<reference key="6">
    <citation type="journal article" date="2005" name="Mol. Cell. Neurosci.">
        <title>Subcellular targeting of DISC1 is dependent on a domain independent from the Nudel binding site.</title>
        <authorList>
            <person name="Brandon N.J."/>
            <person name="Schurov I."/>
            <person name="Camargo L.M."/>
            <person name="Handford E.J."/>
            <person name="Duran-Jimeniz B."/>
            <person name="Hunt P."/>
            <person name="Millar J.K."/>
            <person name="Porteous D.J."/>
            <person name="Shearman M.S."/>
            <person name="Whiting P.J."/>
        </authorList>
    </citation>
    <scope>SUBCELLULAR LOCATION</scope>
</reference>
<reference key="7">
    <citation type="journal article" date="2007" name="Cell">
        <title>Disrupted-In-Schizophrenia 1 regulates integration of newly generated neurons in the adult brain.</title>
        <authorList>
            <person name="Duan X."/>
            <person name="Chang J.H."/>
            <person name="Ge S."/>
            <person name="Faulkner R.L."/>
            <person name="Kim J.Y."/>
            <person name="Kitabatake Y."/>
            <person name="Liu X.B."/>
            <person name="Yang C.H."/>
            <person name="Jordan J.D."/>
            <person name="Ma D.K."/>
            <person name="Liu C.Y."/>
            <person name="Ganesan S."/>
            <person name="Cheng H.J."/>
            <person name="Ming G.L."/>
            <person name="Lu B."/>
            <person name="Song H."/>
        </authorList>
    </citation>
    <scope>FUNCTION</scope>
    <scope>TISSUE SPECIFICITY</scope>
</reference>
<reference key="8">
    <citation type="journal article" date="2009" name="Cell">
        <title>Disrupted in schizophrenia 1 regulates neuronal progenitor proliferation via modulation of GSK3beta/beta-catenin signaling.</title>
        <authorList>
            <person name="Mao Y."/>
            <person name="Ge X."/>
            <person name="Frank C.L."/>
            <person name="Madison J.M."/>
            <person name="Koehler A.N."/>
            <person name="Doud M.K."/>
            <person name="Tassa C."/>
            <person name="Berry E.M."/>
            <person name="Soda T."/>
            <person name="Singh K.K."/>
            <person name="Biechele T."/>
            <person name="Petryshen T.L."/>
            <person name="Moon R.T."/>
            <person name="Haggarty S.J."/>
            <person name="Tsai L.H."/>
        </authorList>
    </citation>
    <scope>FUNCTION</scope>
    <scope>INTERACTION WITH GSK3B</scope>
    <scope>DEVELOPMENTAL STAGE</scope>
</reference>
<reference key="9">
    <citation type="journal article" date="2009" name="Hum. Mol. Genet.">
        <title>Disc1 regulates granule cell migration in the developing hippocampus.</title>
        <authorList>
            <person name="Meyer K.D."/>
            <person name="Morris J.A."/>
        </authorList>
    </citation>
    <scope>FUNCTION</scope>
    <scope>DISRUPTION PHENOTYPE</scope>
    <scope>TISSUE SPECIFICITY</scope>
    <scope>DEVELOPMENTAL STAGE</scope>
</reference>
<reference key="10">
    <citation type="journal article" date="2009" name="Neuron">
        <title>DISC1 regulates new neuron development in the adult brain via modulation of AKT-mTOR signaling through KIAA1212.</title>
        <authorList>
            <person name="Kim J.Y."/>
            <person name="Duan X."/>
            <person name="Liu C.Y."/>
            <person name="Jang M.H."/>
            <person name="Guo J.U."/>
            <person name="Pow-anpongkul N."/>
            <person name="Kang E."/>
            <person name="Song H."/>
            <person name="Ming G.L."/>
        </authorList>
    </citation>
    <scope>FUNCTION</scope>
    <scope>INTERACTION WITH CCDC88A</scope>
</reference>
<reference key="11">
    <citation type="journal article" date="2010" name="J. Biol. Chem.">
        <title>CAMDI, a novel disrupted in schizophrenia 1 (DISC1)-binding protein, is required for radial migration.</title>
        <authorList>
            <person name="Fukuda T."/>
            <person name="Sugita S."/>
            <person name="Inatome R."/>
            <person name="Yanagi S."/>
        </authorList>
    </citation>
    <scope>INTERACTION WITH CCDC141</scope>
</reference>
<reference key="12">
    <citation type="journal article" date="2011" name="J. Neurosci.">
        <title>Deletion of densin-180 results in abnormal behaviors associated with mental illness and reduces mGluR5 and DISC1 in the postsynaptic density fraction.</title>
        <authorList>
            <person name="Carlisle H.J."/>
            <person name="Luong T.N."/>
            <person name="Medina-Marino A."/>
            <person name="Schenker L."/>
            <person name="Khorosheva E."/>
            <person name="Indersmitten T."/>
            <person name="Gunapala K.M."/>
            <person name="Steele A.D."/>
            <person name="O'Dell T.J."/>
            <person name="Patterson P.H."/>
            <person name="Kennedy M.B."/>
        </authorList>
    </citation>
    <scope>SUBCELLULAR LOCATION</scope>
</reference>
<reference evidence="19" key="13">
    <citation type="journal article" date="2021" name="Mol. Psychiatry">
        <title>Structural interaction between DISC1 and ATF4 underlying transcriptional and synaptic dysregulation in an iPSC model of mental disorders.</title>
        <authorList>
            <person name="Wang X."/>
            <person name="Ye F."/>
            <person name="Wen Z."/>
            <person name="Guo Z."/>
            <person name="Yu C."/>
            <person name="Huang W.K."/>
            <person name="Rojas Ringeling F."/>
            <person name="Su Y."/>
            <person name="Zheng W."/>
            <person name="Zhou G."/>
            <person name="Christian K.M."/>
            <person name="Song H."/>
            <person name="Zhang M."/>
            <person name="Ming G.L."/>
        </authorList>
    </citation>
    <scope>STRUCTURE BY NMR OF 314-349 IN COMPLEX WITH ATF4</scope>
    <scope>FUNCTION</scope>
    <scope>INTERACTION WITH ATF4</scope>
    <scope>MUTAGENESIS OF LEU-822</scope>
</reference>
<protein>
    <recommendedName>
        <fullName evidence="17">Disrupted in schizophrenia 1 homolog</fullName>
    </recommendedName>
</protein>
<dbReference type="EMBL" id="AF513723">
    <property type="protein sequence ID" value="AAN77091.1"/>
    <property type="molecule type" value="mRNA"/>
</dbReference>
<dbReference type="EMBL" id="AF513724">
    <property type="protein sequence ID" value="AAN77092.1"/>
    <property type="molecule type" value="mRNA"/>
</dbReference>
<dbReference type="EMBL" id="AJ506179">
    <property type="protein sequence ID" value="CAD44629.1"/>
    <property type="molecule type" value="mRNA"/>
</dbReference>
<dbReference type="EMBL" id="AJ506180">
    <property type="protein sequence ID" value="CAD44630.1"/>
    <property type="molecule type" value="mRNA"/>
</dbReference>
<dbReference type="EMBL" id="AY177673">
    <property type="protein sequence ID" value="AAO19641.1"/>
    <property type="molecule type" value="mRNA"/>
</dbReference>
<dbReference type="EMBL" id="AY320287">
    <property type="protein sequence ID" value="AAP83943.1"/>
    <property type="molecule type" value="mRNA"/>
</dbReference>
<dbReference type="CCDS" id="CCDS40517.1">
    <molecule id="Q811T9-3"/>
</dbReference>
<dbReference type="CCDS" id="CCDS52707.1">
    <molecule id="Q811T9-1"/>
</dbReference>
<dbReference type="RefSeq" id="NP_777278.2">
    <molecule id="Q811T9-3"/>
    <property type="nucleotide sequence ID" value="NM_174853.3"/>
</dbReference>
<dbReference type="RefSeq" id="NP_777279.2">
    <molecule id="Q811T9-1"/>
    <property type="nucleotide sequence ID" value="NM_174854.2"/>
</dbReference>
<dbReference type="RefSeq" id="XP_011246690.1">
    <molecule id="Q811T9-1"/>
    <property type="nucleotide sequence ID" value="XM_011248388.4"/>
</dbReference>
<dbReference type="PDB" id="5YI4">
    <property type="method" value="NMR"/>
    <property type="chains" value="A=765-852"/>
</dbReference>
<dbReference type="PDB" id="6IRR">
    <property type="method" value="NMR"/>
    <property type="chains" value="A=765-852"/>
</dbReference>
<dbReference type="PDBsum" id="5YI4"/>
<dbReference type="PDBsum" id="6IRR"/>
<dbReference type="SMR" id="Q811T9"/>
<dbReference type="BioGRID" id="232675">
    <property type="interactions" value="16"/>
</dbReference>
<dbReference type="CORUM" id="Q811T9"/>
<dbReference type="DIP" id="DIP-54914N"/>
<dbReference type="FunCoup" id="Q811T9">
    <property type="interactions" value="488"/>
</dbReference>
<dbReference type="IntAct" id="Q811T9">
    <property type="interactions" value="11"/>
</dbReference>
<dbReference type="MINT" id="Q811T9"/>
<dbReference type="STRING" id="10090.ENSMUSP00000112410"/>
<dbReference type="iPTMnet" id="Q811T9"/>
<dbReference type="PhosphoSitePlus" id="Q811T9"/>
<dbReference type="PaxDb" id="10090-ENSMUSP00000112410"/>
<dbReference type="ProteomicsDB" id="279693">
    <molecule id="Q811T9-1"/>
</dbReference>
<dbReference type="ProteomicsDB" id="279694">
    <molecule id="Q811T9-2"/>
</dbReference>
<dbReference type="ProteomicsDB" id="279695">
    <molecule id="Q811T9-3"/>
</dbReference>
<dbReference type="ProteomicsDB" id="279696">
    <molecule id="Q811T9-4"/>
</dbReference>
<dbReference type="Antibodypedia" id="34687">
    <property type="antibodies" value="628 antibodies from 38 providers"/>
</dbReference>
<dbReference type="DNASU" id="244667"/>
<dbReference type="Ensembl" id="ENSMUST00000075730.11">
    <molecule id="Q811T9-3"/>
    <property type="protein sequence ID" value="ENSMUSP00000075145.5"/>
    <property type="gene ID" value="ENSMUSG00000043051.19"/>
</dbReference>
<dbReference type="Ensembl" id="ENSMUST00000098311.11">
    <molecule id="Q811T9-1"/>
    <property type="protein sequence ID" value="ENSMUSP00000095914.5"/>
    <property type="gene ID" value="ENSMUSG00000043051.19"/>
</dbReference>
<dbReference type="Ensembl" id="ENSMUST00000117658.8">
    <molecule id="Q811T9-3"/>
    <property type="protein sequence ID" value="ENSMUSP00000112757.2"/>
    <property type="gene ID" value="ENSMUSG00000043051.19"/>
</dbReference>
<dbReference type="Ensembl" id="ENSMUST00000118942.8">
    <molecule id="Q811T9-1"/>
    <property type="protein sequence ID" value="ENSMUSP00000112410.2"/>
    <property type="gene ID" value="ENSMUSG00000043051.19"/>
</dbReference>
<dbReference type="Ensembl" id="ENSMUST00000121953.2">
    <molecule id="Q811T9-2"/>
    <property type="protein sequence ID" value="ENSMUSP00000112929.2"/>
    <property type="gene ID" value="ENSMUSG00000043051.19"/>
</dbReference>
<dbReference type="Ensembl" id="ENSMUST00000122389.8">
    <molecule id="Q811T9-4"/>
    <property type="protein sequence ID" value="ENSMUSP00000112593.2"/>
    <property type="gene ID" value="ENSMUSG00000043051.19"/>
</dbReference>
<dbReference type="GeneID" id="244667"/>
<dbReference type="KEGG" id="mmu:244667"/>
<dbReference type="UCSC" id="uc009nyb.1">
    <molecule id="Q811T9-4"/>
    <property type="organism name" value="mouse"/>
</dbReference>
<dbReference type="UCSC" id="uc009nyc.1">
    <molecule id="Q811T9-1"/>
    <property type="organism name" value="mouse"/>
</dbReference>
<dbReference type="UCSC" id="uc009nyd.1">
    <molecule id="Q811T9-3"/>
    <property type="organism name" value="mouse"/>
</dbReference>
<dbReference type="UCSC" id="uc012gnb.1">
    <molecule id="Q811T9-2"/>
    <property type="organism name" value="mouse"/>
</dbReference>
<dbReference type="AGR" id="MGI:2447658"/>
<dbReference type="CTD" id="27185"/>
<dbReference type="MGI" id="MGI:2447658">
    <property type="gene designation" value="Disc1"/>
</dbReference>
<dbReference type="VEuPathDB" id="HostDB:ENSMUSG00000043051"/>
<dbReference type="eggNOG" id="ENOG502S3S3">
    <property type="taxonomic scope" value="Eukaryota"/>
</dbReference>
<dbReference type="GeneTree" id="ENSGT00390000006176"/>
<dbReference type="HOGENOM" id="CLU_016380_1_0_1"/>
<dbReference type="InParanoid" id="Q811T9"/>
<dbReference type="OrthoDB" id="9836442at2759"/>
<dbReference type="PhylomeDB" id="Q811T9"/>
<dbReference type="TreeFam" id="TF332357"/>
<dbReference type="BioGRID-ORCS" id="244667">
    <property type="hits" value="3 hits in 77 CRISPR screens"/>
</dbReference>
<dbReference type="ChiTaRS" id="Disc1">
    <property type="organism name" value="mouse"/>
</dbReference>
<dbReference type="PRO" id="PR:Q811T9"/>
<dbReference type="Proteomes" id="UP000000589">
    <property type="component" value="Chromosome 8"/>
</dbReference>
<dbReference type="RNAct" id="Q811T9">
    <property type="molecule type" value="protein"/>
</dbReference>
<dbReference type="Bgee" id="ENSMUSG00000043051">
    <property type="expression patterns" value="Expressed in CA2 field of hippocampus and 62 other cell types or tissues"/>
</dbReference>
<dbReference type="ExpressionAtlas" id="Q811T9">
    <property type="expression patterns" value="baseline and differential"/>
</dbReference>
<dbReference type="GO" id="GO:0044297">
    <property type="term" value="C:cell body"/>
    <property type="evidence" value="ECO:0007669"/>
    <property type="project" value="Ensembl"/>
</dbReference>
<dbReference type="GO" id="GO:0090724">
    <property type="term" value="C:central region of growth cone"/>
    <property type="evidence" value="ECO:0007669"/>
    <property type="project" value="Ensembl"/>
</dbReference>
<dbReference type="GO" id="GO:0005813">
    <property type="term" value="C:centrosome"/>
    <property type="evidence" value="ECO:0000314"/>
    <property type="project" value="MGI"/>
</dbReference>
<dbReference type="GO" id="GO:0036064">
    <property type="term" value="C:ciliary basal body"/>
    <property type="evidence" value="ECO:0000314"/>
    <property type="project" value="MGI"/>
</dbReference>
<dbReference type="GO" id="GO:0097546">
    <property type="term" value="C:ciliary base"/>
    <property type="evidence" value="ECO:0007669"/>
    <property type="project" value="Ensembl"/>
</dbReference>
<dbReference type="GO" id="GO:0005829">
    <property type="term" value="C:cytosol"/>
    <property type="evidence" value="ECO:0007669"/>
    <property type="project" value="Ensembl"/>
</dbReference>
<dbReference type="GO" id="GO:0030286">
    <property type="term" value="C:dynein complex"/>
    <property type="evidence" value="ECO:0007669"/>
    <property type="project" value="Ensembl"/>
</dbReference>
<dbReference type="GO" id="GO:0098982">
    <property type="term" value="C:GABA-ergic synapse"/>
    <property type="evidence" value="ECO:0007669"/>
    <property type="project" value="Ensembl"/>
</dbReference>
<dbReference type="GO" id="GO:0098978">
    <property type="term" value="C:glutamatergic synapse"/>
    <property type="evidence" value="ECO:0000314"/>
    <property type="project" value="SynGO"/>
</dbReference>
<dbReference type="GO" id="GO:0045111">
    <property type="term" value="C:intermediate filament cytoskeleton"/>
    <property type="evidence" value="ECO:0007669"/>
    <property type="project" value="Ensembl"/>
</dbReference>
<dbReference type="GO" id="GO:0005871">
    <property type="term" value="C:kinesin complex"/>
    <property type="evidence" value="ECO:0007669"/>
    <property type="project" value="Ensembl"/>
</dbReference>
<dbReference type="GO" id="GO:0005874">
    <property type="term" value="C:microtubule"/>
    <property type="evidence" value="ECO:0007669"/>
    <property type="project" value="UniProtKB-KW"/>
</dbReference>
<dbReference type="GO" id="GO:0005739">
    <property type="term" value="C:mitochondrion"/>
    <property type="evidence" value="ECO:0000266"/>
    <property type="project" value="MGI"/>
</dbReference>
<dbReference type="GO" id="GO:0048471">
    <property type="term" value="C:perinuclear region of cytoplasm"/>
    <property type="evidence" value="ECO:0007669"/>
    <property type="project" value="Ensembl"/>
</dbReference>
<dbReference type="GO" id="GO:0014069">
    <property type="term" value="C:postsynaptic density"/>
    <property type="evidence" value="ECO:0000314"/>
    <property type="project" value="MGI"/>
</dbReference>
<dbReference type="GO" id="GO:0008021">
    <property type="term" value="C:synaptic vesicle"/>
    <property type="evidence" value="ECO:0000314"/>
    <property type="project" value="MGI"/>
</dbReference>
<dbReference type="GO" id="GO:0042802">
    <property type="term" value="F:identical protein binding"/>
    <property type="evidence" value="ECO:0000353"/>
    <property type="project" value="IntAct"/>
</dbReference>
<dbReference type="GO" id="GO:0019894">
    <property type="term" value="F:kinesin binding"/>
    <property type="evidence" value="ECO:0007669"/>
    <property type="project" value="Ensembl"/>
</dbReference>
<dbReference type="GO" id="GO:0060090">
    <property type="term" value="F:molecular adaptor activity"/>
    <property type="evidence" value="ECO:0000314"/>
    <property type="project" value="MGI"/>
</dbReference>
<dbReference type="GO" id="GO:0044877">
    <property type="term" value="F:protein-containing complex binding"/>
    <property type="evidence" value="ECO:0007669"/>
    <property type="project" value="Ensembl"/>
</dbReference>
<dbReference type="GO" id="GO:0060070">
    <property type="term" value="P:canonical Wnt signaling pathway"/>
    <property type="evidence" value="ECO:0000315"/>
    <property type="project" value="DFLAT"/>
</dbReference>
<dbReference type="GO" id="GO:0021846">
    <property type="term" value="P:cell proliferation in forebrain"/>
    <property type="evidence" value="ECO:0000315"/>
    <property type="project" value="DFLAT"/>
</dbReference>
<dbReference type="GO" id="GO:0021799">
    <property type="term" value="P:cerebral cortex radially oriented cell migration"/>
    <property type="evidence" value="ECO:0000315"/>
    <property type="project" value="DFLAT"/>
</dbReference>
<dbReference type="GO" id="GO:0050965">
    <property type="term" value="P:detection of temperature stimulus involved in sensory perception of pain"/>
    <property type="evidence" value="ECO:0000315"/>
    <property type="project" value="MGI"/>
</dbReference>
<dbReference type="GO" id="GO:0000226">
    <property type="term" value="P:microtubule cytoskeleton organization"/>
    <property type="evidence" value="ECO:0007669"/>
    <property type="project" value="Ensembl"/>
</dbReference>
<dbReference type="GO" id="GO:0051560">
    <property type="term" value="P:mitochondrial calcium ion homeostasis"/>
    <property type="evidence" value="ECO:0000315"/>
    <property type="project" value="MGI"/>
</dbReference>
<dbReference type="GO" id="GO:0070050">
    <property type="term" value="P:neuron cellular homeostasis"/>
    <property type="evidence" value="ECO:0000315"/>
    <property type="project" value="MGI"/>
</dbReference>
<dbReference type="GO" id="GO:0001764">
    <property type="term" value="P:neuron migration"/>
    <property type="evidence" value="ECO:0000315"/>
    <property type="project" value="UniProtKB"/>
</dbReference>
<dbReference type="GO" id="GO:1905515">
    <property type="term" value="P:non-motile cilium assembly"/>
    <property type="evidence" value="ECO:0000315"/>
    <property type="project" value="MGI"/>
</dbReference>
<dbReference type="GO" id="GO:0045773">
    <property type="term" value="P:positive regulation of axon extension"/>
    <property type="evidence" value="ECO:0007669"/>
    <property type="project" value="Ensembl"/>
</dbReference>
<dbReference type="GO" id="GO:0001954">
    <property type="term" value="P:positive regulation of cell-matrix adhesion"/>
    <property type="evidence" value="ECO:0007669"/>
    <property type="project" value="Ensembl"/>
</dbReference>
<dbReference type="GO" id="GO:0002052">
    <property type="term" value="P:positive regulation of neuroblast proliferation"/>
    <property type="evidence" value="ECO:0000315"/>
    <property type="project" value="UniProtKB"/>
</dbReference>
<dbReference type="GO" id="GO:0010976">
    <property type="term" value="P:positive regulation of neuron projection development"/>
    <property type="evidence" value="ECO:0007669"/>
    <property type="project" value="Ensembl"/>
</dbReference>
<dbReference type="GO" id="GO:2000060">
    <property type="term" value="P:positive regulation of ubiquitin-dependent protein catabolic process"/>
    <property type="evidence" value="ECO:0000315"/>
    <property type="project" value="MGI"/>
</dbReference>
<dbReference type="GO" id="GO:0030177">
    <property type="term" value="P:positive regulation of Wnt signaling pathway"/>
    <property type="evidence" value="ECO:0000315"/>
    <property type="project" value="UniProtKB"/>
</dbReference>
<dbReference type="GO" id="GO:0008104">
    <property type="term" value="P:protein localization"/>
    <property type="evidence" value="ECO:0000314"/>
    <property type="project" value="MGI"/>
</dbReference>
<dbReference type="GO" id="GO:0071539">
    <property type="term" value="P:protein localization to centrosome"/>
    <property type="evidence" value="ECO:0007669"/>
    <property type="project" value="Ensembl"/>
</dbReference>
<dbReference type="GO" id="GO:0021852">
    <property type="term" value="P:pyramidal neuron migration to cerebral cortex"/>
    <property type="evidence" value="ECO:0007669"/>
    <property type="project" value="Ensembl"/>
</dbReference>
<dbReference type="GO" id="GO:0060998">
    <property type="term" value="P:regulation of dendritic spine development"/>
    <property type="evidence" value="ECO:0007669"/>
    <property type="project" value="Ensembl"/>
</dbReference>
<dbReference type="GO" id="GO:0010975">
    <property type="term" value="P:regulation of neuron projection development"/>
    <property type="evidence" value="ECO:0000315"/>
    <property type="project" value="UniProtKB"/>
</dbReference>
<dbReference type="GO" id="GO:0099175">
    <property type="term" value="P:regulation of postsynapse organization"/>
    <property type="evidence" value="ECO:0000314"/>
    <property type="project" value="SynGO"/>
</dbReference>
<dbReference type="GO" id="GO:0090128">
    <property type="term" value="P:regulation of synapse maturation"/>
    <property type="evidence" value="ECO:0000315"/>
    <property type="project" value="UniProtKB"/>
</dbReference>
<dbReference type="GO" id="GO:0051966">
    <property type="term" value="P:regulation of synaptic transmission, glutamatergic"/>
    <property type="evidence" value="ECO:0000266"/>
    <property type="project" value="MGI"/>
</dbReference>
<dbReference type="GO" id="GO:0051602">
    <property type="term" value="P:response to electrical stimulus"/>
    <property type="evidence" value="ECO:0007669"/>
    <property type="project" value="Ensembl"/>
</dbReference>
<dbReference type="GO" id="GO:0031929">
    <property type="term" value="P:TOR signaling"/>
    <property type="evidence" value="ECO:0000315"/>
    <property type="project" value="UniProtKB"/>
</dbReference>
<dbReference type="GO" id="GO:0006511">
    <property type="term" value="P:ubiquitin-dependent protein catabolic process"/>
    <property type="evidence" value="ECO:0000315"/>
    <property type="project" value="MGI"/>
</dbReference>
<dbReference type="InterPro" id="IPR026081">
    <property type="entry name" value="DISC1"/>
</dbReference>
<dbReference type="PANTHER" id="PTHR14332">
    <property type="entry name" value="DISRUPTED IN SCHIZOPHRENIA 1 PROTEIN"/>
    <property type="match status" value="1"/>
</dbReference>
<dbReference type="PANTHER" id="PTHR14332:SF3">
    <property type="entry name" value="DISRUPTED IN SCHIZOPHRENIA 1 PROTEIN"/>
    <property type="match status" value="1"/>
</dbReference>
<organism>
    <name type="scientific">Mus musculus</name>
    <name type="common">Mouse</name>
    <dbReference type="NCBI Taxonomy" id="10090"/>
    <lineage>
        <taxon>Eukaryota</taxon>
        <taxon>Metazoa</taxon>
        <taxon>Chordata</taxon>
        <taxon>Craniata</taxon>
        <taxon>Vertebrata</taxon>
        <taxon>Euteleostomi</taxon>
        <taxon>Mammalia</taxon>
        <taxon>Eutheria</taxon>
        <taxon>Euarchontoglires</taxon>
        <taxon>Glires</taxon>
        <taxon>Rodentia</taxon>
        <taxon>Myomorpha</taxon>
        <taxon>Muroidea</taxon>
        <taxon>Muridae</taxon>
        <taxon>Murinae</taxon>
        <taxon>Mus</taxon>
        <taxon>Mus</taxon>
    </lineage>
</organism>
<feature type="chain" id="PRO_0000240230" description="Disrupted in schizophrenia 1 homolog">
    <location>
        <begin position="1"/>
        <end position="852"/>
    </location>
</feature>
<feature type="region of interest" description="Interaction with MAP1A" evidence="1">
    <location>
        <begin position="1"/>
        <end position="294"/>
    </location>
</feature>
<feature type="region of interest" description="Disordered" evidence="4">
    <location>
        <begin position="1"/>
        <end position="86"/>
    </location>
</feature>
<feature type="region of interest" description="Disordered" evidence="4">
    <location>
        <begin position="236"/>
        <end position="264"/>
    </location>
</feature>
<feature type="region of interest" description="Disordered" evidence="4">
    <location>
        <begin position="280"/>
        <end position="320"/>
    </location>
</feature>
<feature type="region of interest" description="Interaction with TRAF3IP1" evidence="1">
    <location>
        <begin position="295"/>
        <end position="693"/>
    </location>
</feature>
<feature type="region of interest" description="Required for localization to punctate cytoplasmic foci" evidence="1">
    <location>
        <begin position="437"/>
        <end position="594"/>
    </location>
</feature>
<feature type="region of interest" description="Necessary and sufficient for interaction with PCNT and localization at the centrosome" evidence="1">
    <location>
        <begin position="443"/>
        <end position="852"/>
    </location>
</feature>
<feature type="region of interest" description="Interaction with ATF4 and ATF5" evidence="1">
    <location>
        <begin position="595"/>
        <end position="852"/>
    </location>
</feature>
<feature type="region of interest" description="Disordered" evidence="4">
    <location>
        <begin position="706"/>
        <end position="746"/>
    </location>
</feature>
<feature type="region of interest" description="Interaction with NDEL1 and PAFAH1B1" evidence="1">
    <location>
        <begin position="728"/>
        <end position="852"/>
    </location>
</feature>
<feature type="region of interest" description="Interaction with PAFAH1B1" evidence="1">
    <location>
        <begin position="728"/>
        <end position="852"/>
    </location>
</feature>
<feature type="region of interest" description="Interaction with NDEL1" evidence="1">
    <location>
        <begin position="802"/>
        <end position="835"/>
    </location>
</feature>
<feature type="region of interest" description="Disordered" evidence="4">
    <location>
        <begin position="833"/>
        <end position="852"/>
    </location>
</feature>
<feature type="coiled-coil region" evidence="3">
    <location>
        <begin position="367"/>
        <end position="397"/>
    </location>
</feature>
<feature type="coiled-coil region" evidence="3">
    <location>
        <begin position="449"/>
        <end position="496"/>
    </location>
</feature>
<feature type="compositionally biased region" description="Polar residues" evidence="4">
    <location>
        <begin position="65"/>
        <end position="79"/>
    </location>
</feature>
<feature type="compositionally biased region" description="Basic and acidic residues" evidence="4">
    <location>
        <begin position="253"/>
        <end position="263"/>
    </location>
</feature>
<feature type="compositionally biased region" description="Low complexity" evidence="4">
    <location>
        <begin position="288"/>
        <end position="311"/>
    </location>
</feature>
<feature type="splice variant" id="VSP_019318" description="In isoform 2." evidence="15">
    <original>MQGGGPRGAPIHSPSHGA</original>
    <variation>MEAENSSWLTLPCLLY</variation>
    <location>
        <begin position="1"/>
        <end position="18"/>
    </location>
</feature>
<feature type="splice variant" id="VSP_019319" description="In isoform 4." evidence="16">
    <original>AETLRQRLEELEQE</original>
    <variation>GESKAVRRQFHLSP</variation>
    <location>
        <begin position="374"/>
        <end position="387"/>
    </location>
</feature>
<feature type="splice variant" id="VSP_019320" description="In isoform 4." evidence="16">
    <location>
        <begin position="388"/>
        <end position="852"/>
    </location>
</feature>
<feature type="splice variant" id="VSP_019321" description="In isoform 3." evidence="14">
    <original>GSCFSTAKELTEEIWALSSEREGLEMFLGRLLALSSRNSRRLGIVKEDHLRCRQDLALQDAAHK</original>
    <variation>E</variation>
    <location>
        <begin position="595"/>
        <end position="658"/>
    </location>
</feature>
<feature type="mutagenesis site" description="Abolished interaction with ATF4." evidence="13">
    <original>L</original>
    <variation>Q</variation>
    <location>
        <position position="822"/>
    </location>
</feature>
<feature type="sequence conflict" description="In Ref. 1; AAN77091/AAN77092." evidence="17" ref="1">
    <original>G</original>
    <variation>D</variation>
    <location>
        <position position="8"/>
    </location>
</feature>
<feature type="sequence conflict" description="In Ref. 3; AAO19641/AAP83943." evidence="17" ref="3">
    <original>S</original>
    <variation>F</variation>
    <location>
        <position position="120"/>
    </location>
</feature>
<feature type="sequence conflict" description="In Ref. 1; AAN77091/AAN77092." evidence="17" ref="1">
    <original>A</original>
    <variation>G</variation>
    <location>
        <position position="129"/>
    </location>
</feature>
<feature type="sequence conflict" description="In Ref. 1; AAN77091/AAN77092." evidence="17" ref="1">
    <original>R</original>
    <variation>K</variation>
    <location>
        <position position="141"/>
    </location>
</feature>
<feature type="sequence conflict" description="In Ref. 1; AAN77091/AAN77092." evidence="17" ref="1">
    <original>F</original>
    <variation>C</variation>
    <location>
        <position position="153"/>
    </location>
</feature>
<feature type="sequence conflict" description="In Ref. 1; AAN77091/AAN77092." evidence="17" ref="1">
    <original>K</original>
    <variation>T</variation>
    <location>
        <position position="176"/>
    </location>
</feature>
<feature type="sequence conflict" description="In Ref. 1; AAN77091/AAN77092." evidence="17" ref="1">
    <original>P</original>
    <variation>S</variation>
    <location>
        <position position="190"/>
    </location>
</feature>
<feature type="sequence conflict" description="In Ref. 1; AAN77091/AAN77092." evidence="17" ref="1">
    <original>A</original>
    <variation>P</variation>
    <location>
        <position position="199"/>
    </location>
</feature>
<feature type="sequence conflict" description="In Ref. 1; AAN77091/AAN77092." evidence="17" ref="1">
    <original>S</original>
    <variation>P</variation>
    <location>
        <position position="289"/>
    </location>
</feature>
<feature type="sequence conflict" description="In Ref. 1; AAN77091/AAN77092." evidence="17" ref="1">
    <location>
        <position position="295"/>
    </location>
</feature>
<feature type="sequence conflict" description="In Ref. 1; AAN77091/AAN77092." evidence="17" ref="1">
    <original>G</original>
    <variation>V</variation>
    <location>
        <position position="302"/>
    </location>
</feature>
<feature type="sequence conflict" description="In Ref. 1; AAN77091/AAN77092." evidence="17" ref="1">
    <original>V</original>
    <variation>A</variation>
    <location>
        <position position="365"/>
    </location>
</feature>
<feature type="sequence conflict" description="In Ref. 1; AAN77091/AAN77092." evidence="17" ref="1">
    <original>R</original>
    <variation>H</variation>
    <location>
        <position position="390"/>
    </location>
</feature>
<feature type="sequence conflict" description="In Ref. 2; CAD44629." evidence="17" ref="2">
    <original>A</original>
    <variation>T</variation>
    <location>
        <position position="441"/>
    </location>
</feature>
<feature type="sequence conflict" description="In Ref. 1; AAN77091/AAN77092." evidence="17" ref="1">
    <original>R</original>
    <variation>Q</variation>
    <location>
        <position position="461"/>
    </location>
</feature>
<feature type="sequence conflict" description="In Ref. 2; CAD44629." evidence="17" ref="2">
    <original>S</original>
    <variation>Y</variation>
    <location>
        <position position="474"/>
    </location>
</feature>
<feature type="sequence conflict" description="In Ref. 1; AAN77091/AAN77092." evidence="17" ref="1">
    <original>Q</original>
    <variation>H</variation>
    <location>
        <position position="533"/>
    </location>
</feature>
<feature type="sequence conflict" description="In Ref. 1; AAN77091." evidence="17" ref="1">
    <original>V</original>
    <variation>L</variation>
    <location>
        <position position="639"/>
    </location>
</feature>
<feature type="sequence conflict" description="In Ref. 1; AAN77091." evidence="17" ref="1">
    <original>H</original>
    <variation>Y</variation>
    <location>
        <position position="643"/>
    </location>
</feature>
<feature type="sequence conflict" description="In Ref. 1; AAN77091/AAN77092." evidence="17" ref="1">
    <original>K</original>
    <variation>R</variation>
    <location>
        <position position="788"/>
    </location>
</feature>
<feature type="strand" evidence="20">
    <location>
        <begin position="768"/>
        <end position="772"/>
    </location>
</feature>
<feature type="helix" evidence="20">
    <location>
        <begin position="773"/>
        <end position="800"/>
    </location>
</feature>
<feature type="turn" evidence="20">
    <location>
        <begin position="801"/>
        <end position="803"/>
    </location>
</feature>
<feature type="helix" evidence="20">
    <location>
        <begin position="806"/>
        <end position="829"/>
    </location>
</feature>
<feature type="strand" evidence="20">
    <location>
        <begin position="848"/>
        <end position="852"/>
    </location>
</feature>
<proteinExistence type="evidence at protein level"/>
<evidence type="ECO:0000250" key="1"/>
<evidence type="ECO:0000250" key="2">
    <source>
        <dbReference type="UniProtKB" id="Q9NRI5"/>
    </source>
</evidence>
<evidence type="ECO:0000255" key="3"/>
<evidence type="ECO:0000256" key="4">
    <source>
        <dbReference type="SAM" id="MobiDB-lite"/>
    </source>
</evidence>
<evidence type="ECO:0000269" key="5">
    <source>
    </source>
</evidence>
<evidence type="ECO:0000269" key="6">
    <source>
    </source>
</evidence>
<evidence type="ECO:0000269" key="7">
    <source>
    </source>
</evidence>
<evidence type="ECO:0000269" key="8">
    <source>
    </source>
</evidence>
<evidence type="ECO:0000269" key="9">
    <source>
    </source>
</evidence>
<evidence type="ECO:0000269" key="10">
    <source>
    </source>
</evidence>
<evidence type="ECO:0000269" key="11">
    <source>
    </source>
</evidence>
<evidence type="ECO:0000269" key="12">
    <source>
    </source>
</evidence>
<evidence type="ECO:0000269" key="13">
    <source>
    </source>
</evidence>
<evidence type="ECO:0000303" key="14">
    <source>
    </source>
</evidence>
<evidence type="ECO:0000303" key="15">
    <source>
    </source>
</evidence>
<evidence type="ECO:0000303" key="16">
    <source>
    </source>
</evidence>
<evidence type="ECO:0000305" key="17"/>
<evidence type="ECO:0000312" key="18">
    <source>
        <dbReference type="MGI" id="MGI:2447658"/>
    </source>
</evidence>
<evidence type="ECO:0007744" key="19">
    <source>
        <dbReference type="PDB" id="6IRR"/>
    </source>
</evidence>
<evidence type="ECO:0007829" key="20">
    <source>
        <dbReference type="PDB" id="5YI4"/>
    </source>
</evidence>
<accession>Q811T9</accession>
<accession>Q7TQ21</accession>
<accession>Q8CF87</accession>
<accession>Q8CF88</accession>
<accession>Q8CHP1</accession>
<accession>Q8CHP2</accession>
<keyword id="KW-0002">3D-structure</keyword>
<keyword id="KW-0025">Alternative splicing</keyword>
<keyword id="KW-0175">Coiled coil</keyword>
<keyword id="KW-0963">Cytoplasm</keyword>
<keyword id="KW-0206">Cytoskeleton</keyword>
<keyword id="KW-0217">Developmental protein</keyword>
<keyword id="KW-0493">Microtubule</keyword>
<keyword id="KW-0496">Mitochondrion</keyword>
<keyword id="KW-0524">Neurogenesis</keyword>
<keyword id="KW-1185">Reference proteome</keyword>
<keyword id="KW-0770">Synapse</keyword>
<keyword id="KW-0832">Ubl conjugation</keyword>
<keyword id="KW-0879">Wnt signaling pathway</keyword>
<sequence>MQGGGPRGAPIHSPSHGADSGHGLPPAVAPQRRRLTRRPGYMRSTAGSGIGFLSPAVGMPHPSSAGLTGQQSQHSQSKAGQCGLDPGSHCQASLVGKPFLKSSLVPAVASEGHLHPAQRSMRKRPVHFAVHSKNDSRQSERLTGSFKPGDSGFWQELLSSDSFKSLAPSLDAPWNKGSRGLKTVKPLASPALNGPADIASLPGFQDTFTSSFSFIQLSLGAAGERGEAEGCLPSREAEPLHQRPQEMAAEASSSDRPHGDPRHLWTFSLHAAPGLADLAQVTRSSSRQSECGTVSSSSSDTGFSSQDASSAGGRGDQGGGWADAHGWHTLLREWEPMLQDYLLSNRRQLEVTSLILKLQKCQEKVVEDGDYDTAETLRQRLEELEQEKGRLSWALPSQQPALRSFLGYLAAQIQVALHGATQRAGSDDPEAPLEGQLRTTAQDSLPASITRRDWLIREKQRLQKEIEALQARMSALEAKEKRLSQELEEQEVLLRWPGCDLMALVAQMSPGQLQEVSKALGETLTSANQAPFQVEPPETLRSLRERTKSLNLAVRELTAQVCSGEKLCSSLRRRLSDLDTRLPALLEAKMLALSGSCFSTAKELTEEIWALSSEREGLEMFLGRLLALSSRNSRRLGIVKEDHLRCRQDLALQDAAHKTRMKANTVKCMEVLEGQLSSCRCPLLGRVWKADLETCQLLMQSLQLQEAGSSPHAEDEEQVHSTGEAAQTAALAVPRTPHPEEEKSPLQVLQEWDTHSALSPHCAAGPWKEDSHIVSAEVGEKCEAIGVKLLHLEDQLLGAMYSHDEALFQSLQGELQTVKETLQAMILQLQPTKEAGEASASYPTAGAQETEA</sequence>
<gene>
    <name evidence="18" type="primary">Disc1</name>
</gene>